<name>YL159_YEAST</name>
<reference key="1">
    <citation type="journal article" date="1997" name="Nature">
        <title>The nucleotide sequence of Saccharomyces cerevisiae chromosome XII.</title>
        <authorList>
            <person name="Johnston M."/>
            <person name="Hillier L.W."/>
            <person name="Riles L."/>
            <person name="Albermann K."/>
            <person name="Andre B."/>
            <person name="Ansorge W."/>
            <person name="Benes V."/>
            <person name="Brueckner M."/>
            <person name="Delius H."/>
            <person name="Dubois E."/>
            <person name="Duesterhoeft A."/>
            <person name="Entian K.-D."/>
            <person name="Floeth M."/>
            <person name="Goffeau A."/>
            <person name="Hebling U."/>
            <person name="Heumann K."/>
            <person name="Heuss-Neitzel D."/>
            <person name="Hilbert H."/>
            <person name="Hilger F."/>
            <person name="Kleine K."/>
            <person name="Koetter P."/>
            <person name="Louis E.J."/>
            <person name="Messenguy F."/>
            <person name="Mewes H.-W."/>
            <person name="Miosga T."/>
            <person name="Moestl D."/>
            <person name="Mueller-Auer S."/>
            <person name="Nentwich U."/>
            <person name="Obermaier B."/>
            <person name="Piravandi E."/>
            <person name="Pohl T.M."/>
            <person name="Portetelle D."/>
            <person name="Purnelle B."/>
            <person name="Rechmann S."/>
            <person name="Rieger M."/>
            <person name="Rinke M."/>
            <person name="Rose M."/>
            <person name="Scharfe M."/>
            <person name="Scherens B."/>
            <person name="Scholler P."/>
            <person name="Schwager C."/>
            <person name="Schwarz S."/>
            <person name="Underwood A.P."/>
            <person name="Urrestarazu L.A."/>
            <person name="Vandenbol M."/>
            <person name="Verhasselt P."/>
            <person name="Vierendeels F."/>
            <person name="Voet M."/>
            <person name="Volckaert G."/>
            <person name="Voss H."/>
            <person name="Wambutt R."/>
            <person name="Wedler E."/>
            <person name="Wedler H."/>
            <person name="Zimmermann F.K."/>
            <person name="Zollner A."/>
            <person name="Hani J."/>
            <person name="Hoheisel J.D."/>
        </authorList>
    </citation>
    <scope>NUCLEOTIDE SEQUENCE [LARGE SCALE GENOMIC DNA]</scope>
    <source>
        <strain>ATCC 204508 / S288c</strain>
    </source>
</reference>
<reference key="2">
    <citation type="journal article" date="2014" name="G3 (Bethesda)">
        <title>The reference genome sequence of Saccharomyces cerevisiae: Then and now.</title>
        <authorList>
            <person name="Engel S.R."/>
            <person name="Dietrich F.S."/>
            <person name="Fisk D.G."/>
            <person name="Binkley G."/>
            <person name="Balakrishnan R."/>
            <person name="Costanzo M.C."/>
            <person name="Dwight S.S."/>
            <person name="Hitz B.C."/>
            <person name="Karra K."/>
            <person name="Nash R.S."/>
            <person name="Weng S."/>
            <person name="Wong E.D."/>
            <person name="Lloyd P."/>
            <person name="Skrzypek M.S."/>
            <person name="Miyasato S.R."/>
            <person name="Simison M."/>
            <person name="Cherry J.M."/>
        </authorList>
    </citation>
    <scope>GENOME REANNOTATION</scope>
    <source>
        <strain>ATCC 204508 / S288c</strain>
    </source>
</reference>
<reference key="3">
    <citation type="journal article" date="2003" name="Genome Res.">
        <title>Systematic discovery of new genes in the Saccharomyces cerevisiae genome.</title>
        <authorList>
            <person name="Kessler M.M."/>
            <person name="Zeng Q."/>
            <person name="Hogan S."/>
            <person name="Cook R."/>
            <person name="Morales A.J."/>
            <person name="Cottarel G."/>
        </authorList>
    </citation>
    <scope>GENOME REANNOTATION</scope>
</reference>
<feature type="chain" id="PRO_0000410461" description="Uncharacterized protein YLR159C-A">
    <location>
        <begin position="1"/>
        <end position="43"/>
    </location>
</feature>
<proteinExistence type="predicted"/>
<gene>
    <name type="ordered locus">YLR159C-A</name>
</gene>
<protein>
    <recommendedName>
        <fullName>Uncharacterized protein YLR159C-A</fullName>
    </recommendedName>
</protein>
<accession>P0CY05</accession>
<accession>D6VYF2</accession>
<accession>Q3E748</accession>
<accession>Q3E759</accession>
<accession>Q3E768</accession>
<accession>Q3E812</accession>
<dbReference type="EMBL" id="U51921">
    <property type="status" value="NOT_ANNOTATED_CDS"/>
    <property type="molecule type" value="Genomic_DNA"/>
</dbReference>
<dbReference type="EMBL" id="BK006945">
    <property type="protein sequence ID" value="DAA09480.1"/>
    <property type="molecule type" value="Genomic_DNA"/>
</dbReference>
<dbReference type="RefSeq" id="NP_878122.1">
    <property type="nucleotide sequence ID" value="NM_001184561.1"/>
</dbReference>
<dbReference type="RefSeq" id="NP_878123.1">
    <property type="nucleotide sequence ID" value="NM_001184563.1"/>
</dbReference>
<dbReference type="RefSeq" id="NP_878126.1">
    <property type="nucleotide sequence ID" value="NM_001184564.1"/>
</dbReference>
<dbReference type="RefSeq" id="NP_878127.1">
    <property type="nucleotide sequence ID" value="NM_001184565.1"/>
</dbReference>
<dbReference type="BioGRID" id="36952">
    <property type="interactions" value="128"/>
</dbReference>
<dbReference type="BioGRID" id="36953">
    <property type="interactions" value="62"/>
</dbReference>
<dbReference type="BioGRID" id="36957">
    <property type="interactions" value="27"/>
</dbReference>
<dbReference type="FunCoup" id="P0CY05">
    <property type="interactions" value="34"/>
</dbReference>
<dbReference type="EnsemblFungi" id="YLR154C-H_mRNA">
    <property type="protein sequence ID" value="YLR154C-H"/>
    <property type="gene ID" value="YLR154C-H"/>
</dbReference>
<dbReference type="EnsemblFungi" id="YLR156C-A_mRNA">
    <property type="protein sequence ID" value="YLR156C-A"/>
    <property type="gene ID" value="YLR156C-A"/>
</dbReference>
<dbReference type="EnsemblFungi" id="YLR157C-C_mRNA">
    <property type="protein sequence ID" value="YLR157C-C"/>
    <property type="gene ID" value="YLR157C-C"/>
</dbReference>
<dbReference type="EnsemblFungi" id="YLR159C-A_mRNA">
    <property type="protein sequence ID" value="YLR159C-A"/>
    <property type="gene ID" value="YLR159C-A"/>
</dbReference>
<dbReference type="GeneID" id="1466415"/>
<dbReference type="KEGG" id="sce:YLR154C-H"/>
<dbReference type="KEGG" id="sce:YLR156C-A"/>
<dbReference type="KEGG" id="sce:YLR157C-C"/>
<dbReference type="KEGG" id="sce:YLR159C-A"/>
<dbReference type="AGR" id="SGD:S000028566"/>
<dbReference type="SGD" id="S000028566">
    <property type="gene designation" value="YLR159C-A"/>
</dbReference>
<dbReference type="VEuPathDB" id="FungiDB:YLR154C-H"/>
<dbReference type="VEuPathDB" id="FungiDB:YLR156C-A"/>
<dbReference type="VEuPathDB" id="FungiDB:YLR157C-C"/>
<dbReference type="VEuPathDB" id="FungiDB:YLR159C-A"/>
<dbReference type="GeneTree" id="ENSGT00940000179980"/>
<dbReference type="HOGENOM" id="CLU_3242482_0_0_1"/>
<dbReference type="InParanoid" id="P0CY05"/>
<dbReference type="OrthoDB" id="4088270at2759"/>
<dbReference type="BioCyc" id="YEAST:G3O-32579-MONOMER"/>
<dbReference type="PRO" id="PR:P0CY05"/>
<dbReference type="Proteomes" id="UP000002311">
    <property type="component" value="Chromosome XII"/>
</dbReference>
<sequence length="43" mass="4707">MYSCAKKKTTAAPEFRVWSPTTLLGQALTSLTTVDRTGNGAFW</sequence>
<keyword id="KW-1185">Reference proteome</keyword>
<organism>
    <name type="scientific">Saccharomyces cerevisiae (strain ATCC 204508 / S288c)</name>
    <name type="common">Baker's yeast</name>
    <dbReference type="NCBI Taxonomy" id="559292"/>
    <lineage>
        <taxon>Eukaryota</taxon>
        <taxon>Fungi</taxon>
        <taxon>Dikarya</taxon>
        <taxon>Ascomycota</taxon>
        <taxon>Saccharomycotina</taxon>
        <taxon>Saccharomycetes</taxon>
        <taxon>Saccharomycetales</taxon>
        <taxon>Saccharomycetaceae</taxon>
        <taxon>Saccharomyces</taxon>
    </lineage>
</organism>